<protein>
    <recommendedName>
        <fullName>Superoxide dismutase [Mn/Fe] 2</fullName>
        <ecNumber evidence="2">1.15.1.1</ecNumber>
    </recommendedName>
</protein>
<gene>
    <name type="primary">sodM</name>
    <name type="ordered locus">SAV0133</name>
</gene>
<dbReference type="EC" id="1.15.1.1" evidence="2"/>
<dbReference type="EMBL" id="BA000017">
    <property type="protein sequence ID" value="BAB56295.1"/>
    <property type="molecule type" value="Genomic_DNA"/>
</dbReference>
<dbReference type="RefSeq" id="WP_000874681.1">
    <property type="nucleotide sequence ID" value="NC_002758.2"/>
</dbReference>
<dbReference type="SMR" id="P66830"/>
<dbReference type="KEGG" id="sav:SAV0133"/>
<dbReference type="HOGENOM" id="CLU_031625_0_0_9"/>
<dbReference type="PhylomeDB" id="P66830"/>
<dbReference type="Proteomes" id="UP000002481">
    <property type="component" value="Chromosome"/>
</dbReference>
<dbReference type="GO" id="GO:0005737">
    <property type="term" value="C:cytoplasm"/>
    <property type="evidence" value="ECO:0007669"/>
    <property type="project" value="TreeGrafter"/>
</dbReference>
<dbReference type="GO" id="GO:0046872">
    <property type="term" value="F:metal ion binding"/>
    <property type="evidence" value="ECO:0007669"/>
    <property type="project" value="UniProtKB-KW"/>
</dbReference>
<dbReference type="GO" id="GO:0004784">
    <property type="term" value="F:superoxide dismutase activity"/>
    <property type="evidence" value="ECO:0007669"/>
    <property type="project" value="UniProtKB-EC"/>
</dbReference>
<dbReference type="FunFam" id="1.10.287.990:FF:000001">
    <property type="entry name" value="Superoxide dismutase"/>
    <property type="match status" value="1"/>
</dbReference>
<dbReference type="FunFam" id="3.55.40.20:FF:000001">
    <property type="entry name" value="Superoxide dismutase"/>
    <property type="match status" value="1"/>
</dbReference>
<dbReference type="Gene3D" id="1.10.287.990">
    <property type="entry name" value="Fe,Mn superoxide dismutase (SOD) domain"/>
    <property type="match status" value="1"/>
</dbReference>
<dbReference type="Gene3D" id="3.55.40.20">
    <property type="entry name" value="Iron/manganese superoxide dismutase, C-terminal domain"/>
    <property type="match status" value="1"/>
</dbReference>
<dbReference type="InterPro" id="IPR001189">
    <property type="entry name" value="Mn/Fe_SOD"/>
</dbReference>
<dbReference type="InterPro" id="IPR019833">
    <property type="entry name" value="Mn/Fe_SOD_BS"/>
</dbReference>
<dbReference type="InterPro" id="IPR019832">
    <property type="entry name" value="Mn/Fe_SOD_C"/>
</dbReference>
<dbReference type="InterPro" id="IPR019831">
    <property type="entry name" value="Mn/Fe_SOD_N"/>
</dbReference>
<dbReference type="InterPro" id="IPR036324">
    <property type="entry name" value="Mn/Fe_SOD_N_sf"/>
</dbReference>
<dbReference type="InterPro" id="IPR036314">
    <property type="entry name" value="SOD_C_sf"/>
</dbReference>
<dbReference type="PANTHER" id="PTHR43595">
    <property type="entry name" value="37S RIBOSOMAL PROTEIN S26, MITOCHONDRIAL"/>
    <property type="match status" value="1"/>
</dbReference>
<dbReference type="PANTHER" id="PTHR43595:SF2">
    <property type="entry name" value="SMALL RIBOSOMAL SUBUNIT PROTEIN MS42"/>
    <property type="match status" value="1"/>
</dbReference>
<dbReference type="Pfam" id="PF02777">
    <property type="entry name" value="Sod_Fe_C"/>
    <property type="match status" value="1"/>
</dbReference>
<dbReference type="Pfam" id="PF00081">
    <property type="entry name" value="Sod_Fe_N"/>
    <property type="match status" value="1"/>
</dbReference>
<dbReference type="PIRSF" id="PIRSF000349">
    <property type="entry name" value="SODismutase"/>
    <property type="match status" value="1"/>
</dbReference>
<dbReference type="PRINTS" id="PR01703">
    <property type="entry name" value="MNSODISMTASE"/>
</dbReference>
<dbReference type="SUPFAM" id="SSF54719">
    <property type="entry name" value="Fe,Mn superoxide dismutase (SOD), C-terminal domain"/>
    <property type="match status" value="1"/>
</dbReference>
<dbReference type="SUPFAM" id="SSF46609">
    <property type="entry name" value="Fe,Mn superoxide dismutase (SOD), N-terminal domain"/>
    <property type="match status" value="1"/>
</dbReference>
<dbReference type="PROSITE" id="PS00088">
    <property type="entry name" value="SOD_MN"/>
    <property type="match status" value="1"/>
</dbReference>
<proteinExistence type="inferred from homology"/>
<reference key="1">
    <citation type="journal article" date="2001" name="Lancet">
        <title>Whole genome sequencing of meticillin-resistant Staphylococcus aureus.</title>
        <authorList>
            <person name="Kuroda M."/>
            <person name="Ohta T."/>
            <person name="Uchiyama I."/>
            <person name="Baba T."/>
            <person name="Yuzawa H."/>
            <person name="Kobayashi I."/>
            <person name="Cui L."/>
            <person name="Oguchi A."/>
            <person name="Aoki K."/>
            <person name="Nagai Y."/>
            <person name="Lian J.-Q."/>
            <person name="Ito T."/>
            <person name="Kanamori M."/>
            <person name="Matsumaru H."/>
            <person name="Maruyama A."/>
            <person name="Murakami H."/>
            <person name="Hosoyama A."/>
            <person name="Mizutani-Ui Y."/>
            <person name="Takahashi N.K."/>
            <person name="Sawano T."/>
            <person name="Inoue R."/>
            <person name="Kaito C."/>
            <person name="Sekimizu K."/>
            <person name="Hirakawa H."/>
            <person name="Kuhara S."/>
            <person name="Goto S."/>
            <person name="Yabuzaki J."/>
            <person name="Kanehisa M."/>
            <person name="Yamashita A."/>
            <person name="Oshima K."/>
            <person name="Furuya K."/>
            <person name="Yoshino C."/>
            <person name="Shiba T."/>
            <person name="Hattori M."/>
            <person name="Ogasawara N."/>
            <person name="Hayashi H."/>
            <person name="Hiramatsu K."/>
        </authorList>
    </citation>
    <scope>NUCLEOTIDE SEQUENCE [LARGE SCALE GENOMIC DNA]</scope>
    <source>
        <strain>Mu50 / ATCC 700699</strain>
    </source>
</reference>
<sequence>MAFKLPNLPYAYDALEPYIDQRTMEFHHDKHHNTYVTKLNATVEGTELEHQSLADMIANLDKVPEAMRMSVRNNGGGHFNHSLFWEILSPNSEEKGGVIDDIKAQWGTLDEFKNEFANKATTLFGSGWTWLVVNDGKLEIVTTPNQDNPLTEGKTPILLFDVWEHAYYLKYQNKRPDYMTAFWNIVNWKKVDELYQAAK</sequence>
<feature type="chain" id="PRO_0000160080" description="Superoxide dismutase [Mn/Fe] 2">
    <location>
        <begin position="1"/>
        <end position="199"/>
    </location>
</feature>
<feature type="binding site" evidence="2">
    <location>
        <position position="27"/>
    </location>
    <ligand>
        <name>Fe(3+)</name>
        <dbReference type="ChEBI" id="CHEBI:29034"/>
    </ligand>
</feature>
<feature type="binding site" evidence="2">
    <location>
        <position position="27"/>
    </location>
    <ligand>
        <name>Mn(2+)</name>
        <dbReference type="ChEBI" id="CHEBI:29035"/>
    </ligand>
</feature>
<feature type="binding site" evidence="2">
    <location>
        <position position="81"/>
    </location>
    <ligand>
        <name>Fe(3+)</name>
        <dbReference type="ChEBI" id="CHEBI:29034"/>
    </ligand>
</feature>
<feature type="binding site" evidence="2">
    <location>
        <position position="81"/>
    </location>
    <ligand>
        <name>Mn(2+)</name>
        <dbReference type="ChEBI" id="CHEBI:29035"/>
    </ligand>
</feature>
<feature type="binding site" evidence="2">
    <location>
        <position position="161"/>
    </location>
    <ligand>
        <name>Fe(3+)</name>
        <dbReference type="ChEBI" id="CHEBI:29034"/>
    </ligand>
</feature>
<feature type="binding site" evidence="2">
    <location>
        <position position="161"/>
    </location>
    <ligand>
        <name>Mn(2+)</name>
        <dbReference type="ChEBI" id="CHEBI:29035"/>
    </ligand>
</feature>
<feature type="binding site" evidence="2">
    <location>
        <position position="165"/>
    </location>
    <ligand>
        <name>Fe(3+)</name>
        <dbReference type="ChEBI" id="CHEBI:29034"/>
    </ligand>
</feature>
<feature type="binding site" evidence="2">
    <location>
        <position position="165"/>
    </location>
    <ligand>
        <name>Mn(2+)</name>
        <dbReference type="ChEBI" id="CHEBI:29035"/>
    </ligand>
</feature>
<accession>P66830</accession>
<accession>Q99X82</accession>
<organism>
    <name type="scientific">Staphylococcus aureus (strain Mu50 / ATCC 700699)</name>
    <dbReference type="NCBI Taxonomy" id="158878"/>
    <lineage>
        <taxon>Bacteria</taxon>
        <taxon>Bacillati</taxon>
        <taxon>Bacillota</taxon>
        <taxon>Bacilli</taxon>
        <taxon>Bacillales</taxon>
        <taxon>Staphylococcaceae</taxon>
        <taxon>Staphylococcus</taxon>
    </lineage>
</organism>
<name>SODM2_STAAM</name>
<comment type="function">
    <text evidence="2">Destroys superoxide anion radicals which are normally produced within the cells and which are toxic to biological systems. Catalyzes the dismutation of superoxide anion radicals into O2 and H2O2 by successive reduction and oxidation of the transition metal ion at the active site.</text>
</comment>
<comment type="catalytic activity">
    <reaction evidence="2">
        <text>2 superoxide + 2 H(+) = H2O2 + O2</text>
        <dbReference type="Rhea" id="RHEA:20696"/>
        <dbReference type="ChEBI" id="CHEBI:15378"/>
        <dbReference type="ChEBI" id="CHEBI:15379"/>
        <dbReference type="ChEBI" id="CHEBI:16240"/>
        <dbReference type="ChEBI" id="CHEBI:18421"/>
        <dbReference type="EC" id="1.15.1.1"/>
    </reaction>
    <physiologicalReaction direction="left-to-right" evidence="2">
        <dbReference type="Rhea" id="RHEA:20697"/>
    </physiologicalReaction>
</comment>
<comment type="cofactor">
    <cofactor evidence="2">
        <name>Mn(2+)</name>
        <dbReference type="ChEBI" id="CHEBI:29035"/>
    </cofactor>
    <cofactor evidence="2">
        <name>Fe(3+)</name>
        <dbReference type="ChEBI" id="CHEBI:29034"/>
    </cofactor>
    <text evidence="2">Binds 1 Mn(2+) or Fe(3+) ion per subunit.</text>
</comment>
<comment type="subunit">
    <text evidence="1">Homodimer. Can also form a heterodimer with SodA (By similarity).</text>
</comment>
<comment type="similarity">
    <text evidence="3">Belongs to the iron/manganese superoxide dismutase family.</text>
</comment>
<keyword id="KW-0408">Iron</keyword>
<keyword id="KW-0464">Manganese</keyword>
<keyword id="KW-0479">Metal-binding</keyword>
<keyword id="KW-0560">Oxidoreductase</keyword>
<keyword id="KW-0346">Stress response</keyword>
<evidence type="ECO:0000250" key="1"/>
<evidence type="ECO:0000250" key="2">
    <source>
        <dbReference type="UniProtKB" id="P80293"/>
    </source>
</evidence>
<evidence type="ECO:0000305" key="3"/>